<keyword id="KW-0025">Alternative splicing</keyword>
<keyword id="KW-0106">Calcium</keyword>
<keyword id="KW-1003">Cell membrane</keyword>
<keyword id="KW-0963">Cytoplasm</keyword>
<keyword id="KW-0968">Cytoplasmic vesicle</keyword>
<keyword id="KW-1015">Disulfide bond</keyword>
<keyword id="KW-0472">Membrane</keyword>
<keyword id="KW-0479">Metal-binding</keyword>
<keyword id="KW-0597">Phosphoprotein</keyword>
<keyword id="KW-1185">Reference proteome</keyword>
<keyword id="KW-0677">Repeat</keyword>
<keyword id="KW-0770">Synapse</keyword>
<keyword id="KW-0812">Transmembrane</keyword>
<keyword id="KW-1133">Transmembrane helix</keyword>
<protein>
    <recommendedName>
        <fullName>Synaptotagmin-6</fullName>
    </recommendedName>
    <alternativeName>
        <fullName>Synaptotagmin VI</fullName>
        <shortName>SytVI</shortName>
    </alternativeName>
</protein>
<gene>
    <name type="primary">Syt6</name>
</gene>
<reference key="1">
    <citation type="journal article" date="1995" name="Nature">
        <title>Ca(2+)-dependent and -independent activities of neural and non-neural synaptotagmins.</title>
        <authorList>
            <person name="Li C."/>
            <person name="Ullrich B."/>
            <person name="Zhang J.Z."/>
            <person name="Anderson R.G.W."/>
            <person name="Brose N."/>
            <person name="Suedhof T.C."/>
        </authorList>
    </citation>
    <scope>NUCLEOTIDE SEQUENCE [MRNA] (ISOFORM 1)</scope>
    <source>
        <tissue>Brain</tissue>
    </source>
</reference>
<reference key="2">
    <citation type="journal article" date="2004" name="Genome Res.">
        <title>The status, quality, and expansion of the NIH full-length cDNA project: the Mammalian Gene Collection (MGC).</title>
        <authorList>
            <consortium name="The MGC Project Team"/>
        </authorList>
    </citation>
    <scope>NUCLEOTIDE SEQUENCE [LARGE SCALE MRNA] (ISOFORM 2)</scope>
    <source>
        <tissue>Thymus</tissue>
    </source>
</reference>
<reference key="3">
    <citation type="journal article" date="2012" name="Nat. Commun.">
        <title>Quantitative maps of protein phosphorylation sites across 14 different rat organs and tissues.</title>
        <authorList>
            <person name="Lundby A."/>
            <person name="Secher A."/>
            <person name="Lage K."/>
            <person name="Nordsborg N.B."/>
            <person name="Dmytriyev A."/>
            <person name="Lundby C."/>
            <person name="Olsen J.V."/>
        </authorList>
    </citation>
    <scope>IDENTIFICATION BY MASS SPECTROMETRY [LARGE SCALE ANALYSIS]</scope>
</reference>
<feature type="chain" id="PRO_0000183956" description="Synaptotagmin-6">
    <location>
        <begin position="1"/>
        <end position="511"/>
    </location>
</feature>
<feature type="topological domain" description="Vesicular" evidence="6">
    <location>
        <begin position="1"/>
        <end position="59"/>
    </location>
</feature>
<feature type="transmembrane region" description="Helical" evidence="6">
    <location>
        <begin position="60"/>
        <end position="80"/>
    </location>
</feature>
<feature type="topological domain" description="Cytoplasmic" evidence="6">
    <location>
        <begin position="81"/>
        <end position="511"/>
    </location>
</feature>
<feature type="domain" description="C2 1" evidence="7">
    <location>
        <begin position="230"/>
        <end position="351"/>
    </location>
</feature>
<feature type="domain" description="C2 2" evidence="7">
    <location>
        <begin position="362"/>
        <end position="495"/>
    </location>
</feature>
<feature type="region of interest" description="Cysteine motif" evidence="2">
    <location>
        <begin position="12"/>
        <end position="38"/>
    </location>
</feature>
<feature type="region of interest" description="Disordered" evidence="8">
    <location>
        <begin position="93"/>
        <end position="118"/>
    </location>
</feature>
<feature type="region of interest" description="Disordered" evidence="8">
    <location>
        <begin position="157"/>
        <end position="182"/>
    </location>
</feature>
<feature type="region of interest" description="Necessary for cell membrane association (isoform 2)" evidence="5">
    <location>
        <begin position="483"/>
        <end position="511"/>
    </location>
</feature>
<feature type="compositionally biased region" description="Low complexity" evidence="8">
    <location>
        <begin position="93"/>
        <end position="103"/>
    </location>
</feature>
<feature type="compositionally biased region" description="Polar residues" evidence="8">
    <location>
        <begin position="160"/>
        <end position="172"/>
    </location>
</feature>
<feature type="binding site" evidence="7">
    <location>
        <position position="261"/>
    </location>
    <ligand>
        <name>Ca(2+)</name>
        <dbReference type="ChEBI" id="CHEBI:29108"/>
        <label>1</label>
    </ligand>
</feature>
<feature type="binding site" evidence="7">
    <location>
        <position position="261"/>
    </location>
    <ligand>
        <name>Ca(2+)</name>
        <dbReference type="ChEBI" id="CHEBI:29108"/>
        <label>2</label>
    </ligand>
</feature>
<feature type="binding site" evidence="7">
    <location>
        <position position="267"/>
    </location>
    <ligand>
        <name>Ca(2+)</name>
        <dbReference type="ChEBI" id="CHEBI:29108"/>
        <label>1</label>
    </ligand>
</feature>
<feature type="binding site" evidence="7">
    <location>
        <position position="319"/>
    </location>
    <ligand>
        <name>Ca(2+)</name>
        <dbReference type="ChEBI" id="CHEBI:29108"/>
        <label>1</label>
    </ligand>
</feature>
<feature type="binding site" evidence="7">
    <location>
        <position position="319"/>
    </location>
    <ligand>
        <name>Ca(2+)</name>
        <dbReference type="ChEBI" id="CHEBI:29108"/>
        <label>2</label>
    </ligand>
</feature>
<feature type="binding site" evidence="7">
    <location>
        <position position="320"/>
    </location>
    <ligand>
        <name>Ca(2+)</name>
        <dbReference type="ChEBI" id="CHEBI:29108"/>
        <label>1</label>
    </ligand>
</feature>
<feature type="binding site" evidence="7">
    <location>
        <position position="321"/>
    </location>
    <ligand>
        <name>Ca(2+)</name>
        <dbReference type="ChEBI" id="CHEBI:29108"/>
        <label>1</label>
    </ligand>
</feature>
<feature type="binding site" evidence="7">
    <location>
        <position position="321"/>
    </location>
    <ligand>
        <name>Ca(2+)</name>
        <dbReference type="ChEBI" id="CHEBI:29108"/>
        <label>2</label>
    </ligand>
</feature>
<feature type="binding site" evidence="7">
    <location>
        <position position="321"/>
    </location>
    <ligand>
        <name>Ca(2+)</name>
        <dbReference type="ChEBI" id="CHEBI:29108"/>
        <label>3</label>
    </ligand>
</feature>
<feature type="binding site" evidence="7">
    <location>
        <position position="324"/>
    </location>
    <ligand>
        <name>Ca(2+)</name>
        <dbReference type="ChEBI" id="CHEBI:29108"/>
        <label>3</label>
    </ligand>
</feature>
<feature type="binding site" evidence="7">
    <location>
        <position position="327"/>
    </location>
    <ligand>
        <name>Ca(2+)</name>
        <dbReference type="ChEBI" id="CHEBI:29108"/>
        <label>2</label>
    </ligand>
</feature>
<feature type="binding site" evidence="7">
    <location>
        <position position="327"/>
    </location>
    <ligand>
        <name>Ca(2+)</name>
        <dbReference type="ChEBI" id="CHEBI:29108"/>
        <label>3</label>
    </ligand>
</feature>
<feature type="binding site" evidence="7">
    <location>
        <position position="393"/>
    </location>
    <ligand>
        <name>Ca(2+)</name>
        <dbReference type="ChEBI" id="CHEBI:29108"/>
        <label>4</label>
    </ligand>
</feature>
<feature type="binding site" evidence="7">
    <location>
        <position position="399"/>
    </location>
    <ligand>
        <name>Ca(2+)</name>
        <dbReference type="ChEBI" id="CHEBI:29108"/>
        <label>4</label>
    </ligand>
</feature>
<feature type="binding site" evidence="7">
    <location>
        <position position="453"/>
    </location>
    <ligand>
        <name>Ca(2+)</name>
        <dbReference type="ChEBI" id="CHEBI:29108"/>
        <label>4</label>
    </ligand>
</feature>
<feature type="binding site" evidence="7">
    <location>
        <position position="455"/>
    </location>
    <ligand>
        <name>Ca(2+)</name>
        <dbReference type="ChEBI" id="CHEBI:29108"/>
        <label>4</label>
    </ligand>
</feature>
<feature type="modified residue" description="Phosphoserine" evidence="4">
    <location>
        <position position="217"/>
    </location>
</feature>
<feature type="splice variant" id="VSP_041730" description="In isoform 2." evidence="9">
    <location>
        <begin position="1"/>
        <end position="85"/>
    </location>
</feature>
<name>SYT6_RAT</name>
<dbReference type="EMBL" id="U20105">
    <property type="protein sequence ID" value="AAA87724.1"/>
    <property type="molecule type" value="mRNA"/>
</dbReference>
<dbReference type="EMBL" id="BC099185">
    <property type="protein sequence ID" value="AAH99185.1"/>
    <property type="molecule type" value="mRNA"/>
</dbReference>
<dbReference type="PIR" id="S58399">
    <property type="entry name" value="S58399"/>
</dbReference>
<dbReference type="RefSeq" id="NP_071527.1">
    <molecule id="Q62746-1"/>
    <property type="nucleotide sequence ID" value="NM_022191.3"/>
</dbReference>
<dbReference type="SMR" id="Q62746"/>
<dbReference type="FunCoup" id="Q62746">
    <property type="interactions" value="1138"/>
</dbReference>
<dbReference type="STRING" id="10116.ENSRNOP00000025953"/>
<dbReference type="PhosphoSitePlus" id="Q62746"/>
<dbReference type="PaxDb" id="10116-ENSRNOP00000025953"/>
<dbReference type="Ensembl" id="ENSRNOT00000077739.2">
    <molecule id="Q62746-2"/>
    <property type="protein sequence ID" value="ENSRNOP00000069764.2"/>
    <property type="gene ID" value="ENSRNOG00000019163.7"/>
</dbReference>
<dbReference type="GeneID" id="60565"/>
<dbReference type="KEGG" id="rno:60565"/>
<dbReference type="UCSC" id="RGD:62012">
    <molecule id="Q62746-1"/>
    <property type="organism name" value="rat"/>
</dbReference>
<dbReference type="AGR" id="RGD:62012"/>
<dbReference type="CTD" id="148281"/>
<dbReference type="RGD" id="62012">
    <property type="gene designation" value="Syt6"/>
</dbReference>
<dbReference type="VEuPathDB" id="HostDB:ENSRNOG00000019163"/>
<dbReference type="eggNOG" id="KOG1028">
    <property type="taxonomic scope" value="Eukaryota"/>
</dbReference>
<dbReference type="GeneTree" id="ENSGT00940000157665"/>
<dbReference type="InParanoid" id="Q62746"/>
<dbReference type="OMA" id="VMRVGCN"/>
<dbReference type="PhylomeDB" id="Q62746"/>
<dbReference type="PRO" id="PR:Q62746"/>
<dbReference type="Proteomes" id="UP000002494">
    <property type="component" value="Chromosome 2"/>
</dbReference>
<dbReference type="Bgee" id="ENSRNOG00000019163">
    <property type="expression patterns" value="Expressed in thymus and 7 other cell types or tissues"/>
</dbReference>
<dbReference type="ExpressionAtlas" id="Q62746">
    <property type="expression patterns" value="baseline and differential"/>
</dbReference>
<dbReference type="GO" id="GO:0009898">
    <property type="term" value="C:cytoplasmic side of plasma membrane"/>
    <property type="evidence" value="ECO:0000250"/>
    <property type="project" value="UniProtKB"/>
</dbReference>
<dbReference type="GO" id="GO:0005829">
    <property type="term" value="C:cytosol"/>
    <property type="evidence" value="ECO:0000250"/>
    <property type="project" value="UniProtKB"/>
</dbReference>
<dbReference type="GO" id="GO:0070382">
    <property type="term" value="C:exocytic vesicle"/>
    <property type="evidence" value="ECO:0000318"/>
    <property type="project" value="GO_Central"/>
</dbReference>
<dbReference type="GO" id="GO:0098978">
    <property type="term" value="C:glutamatergic synapse"/>
    <property type="evidence" value="ECO:0000314"/>
    <property type="project" value="SynGO"/>
</dbReference>
<dbReference type="GO" id="GO:0016020">
    <property type="term" value="C:membrane"/>
    <property type="evidence" value="ECO:0000266"/>
    <property type="project" value="RGD"/>
</dbReference>
<dbReference type="GO" id="GO:0097038">
    <property type="term" value="C:perinuclear endoplasmic reticulum"/>
    <property type="evidence" value="ECO:0000266"/>
    <property type="project" value="RGD"/>
</dbReference>
<dbReference type="GO" id="GO:0005886">
    <property type="term" value="C:plasma membrane"/>
    <property type="evidence" value="ECO:0000318"/>
    <property type="project" value="GO_Central"/>
</dbReference>
<dbReference type="GO" id="GO:0098794">
    <property type="term" value="C:postsynapse"/>
    <property type="evidence" value="ECO:0007669"/>
    <property type="project" value="GOC"/>
</dbReference>
<dbReference type="GO" id="GO:0097060">
    <property type="term" value="C:synaptic membrane"/>
    <property type="evidence" value="ECO:0000314"/>
    <property type="project" value="SynGO"/>
</dbReference>
<dbReference type="GO" id="GO:0030672">
    <property type="term" value="C:synaptic vesicle membrane"/>
    <property type="evidence" value="ECO:0007669"/>
    <property type="project" value="UniProtKB-SubCell"/>
</dbReference>
<dbReference type="GO" id="GO:0061891">
    <property type="term" value="F:calcium ion sensor activity"/>
    <property type="evidence" value="ECO:0000318"/>
    <property type="project" value="GO_Central"/>
</dbReference>
<dbReference type="GO" id="GO:0005544">
    <property type="term" value="F:calcium-dependent phospholipid binding"/>
    <property type="evidence" value="ECO:0000266"/>
    <property type="project" value="RGD"/>
</dbReference>
<dbReference type="GO" id="GO:0048306">
    <property type="term" value="F:calcium-dependent protein binding"/>
    <property type="evidence" value="ECO:0000266"/>
    <property type="project" value="RGD"/>
</dbReference>
<dbReference type="GO" id="GO:0030276">
    <property type="term" value="F:clathrin binding"/>
    <property type="evidence" value="ECO:0000266"/>
    <property type="project" value="RGD"/>
</dbReference>
<dbReference type="GO" id="GO:0042802">
    <property type="term" value="F:identical protein binding"/>
    <property type="evidence" value="ECO:0000266"/>
    <property type="project" value="RGD"/>
</dbReference>
<dbReference type="GO" id="GO:0046872">
    <property type="term" value="F:metal ion binding"/>
    <property type="evidence" value="ECO:0007669"/>
    <property type="project" value="UniProtKB-KW"/>
</dbReference>
<dbReference type="GO" id="GO:0001786">
    <property type="term" value="F:phosphatidylserine binding"/>
    <property type="evidence" value="ECO:0000266"/>
    <property type="project" value="RGD"/>
</dbReference>
<dbReference type="GO" id="GO:0042803">
    <property type="term" value="F:protein homodimerization activity"/>
    <property type="evidence" value="ECO:0000266"/>
    <property type="project" value="RGD"/>
</dbReference>
<dbReference type="GO" id="GO:0000149">
    <property type="term" value="F:SNARE binding"/>
    <property type="evidence" value="ECO:0000318"/>
    <property type="project" value="GO_Central"/>
</dbReference>
<dbReference type="GO" id="GO:0019905">
    <property type="term" value="F:syntaxin binding"/>
    <property type="evidence" value="ECO:0000314"/>
    <property type="project" value="RGD"/>
</dbReference>
<dbReference type="GO" id="GO:0060478">
    <property type="term" value="P:acrosomal vesicle exocytosis"/>
    <property type="evidence" value="ECO:0000266"/>
    <property type="project" value="RGD"/>
</dbReference>
<dbReference type="GO" id="GO:0007340">
    <property type="term" value="P:acrosome reaction"/>
    <property type="evidence" value="ECO:0000266"/>
    <property type="project" value="RGD"/>
</dbReference>
<dbReference type="GO" id="GO:0007268">
    <property type="term" value="P:chemical synaptic transmission"/>
    <property type="evidence" value="ECO:0000318"/>
    <property type="project" value="GO_Central"/>
</dbReference>
<dbReference type="GO" id="GO:0150038">
    <property type="term" value="P:postsynaptic dense core vesicle exocytosis"/>
    <property type="evidence" value="ECO:0000314"/>
    <property type="project" value="SynGO"/>
</dbReference>
<dbReference type="GO" id="GO:0017158">
    <property type="term" value="P:regulation of calcium ion-dependent exocytosis"/>
    <property type="evidence" value="ECO:0000318"/>
    <property type="project" value="GO_Central"/>
</dbReference>
<dbReference type="GO" id="GO:0016192">
    <property type="term" value="P:vesicle-mediated transport"/>
    <property type="evidence" value="ECO:0000318"/>
    <property type="project" value="GO_Central"/>
</dbReference>
<dbReference type="CDD" id="cd08385">
    <property type="entry name" value="C2A_Synaptotagmin-1-5-6-9-10"/>
    <property type="match status" value="1"/>
</dbReference>
<dbReference type="CDD" id="cd08403">
    <property type="entry name" value="C2B_Synaptotagmin-3-5-6-9-10"/>
    <property type="match status" value="1"/>
</dbReference>
<dbReference type="FunFam" id="2.60.40.150:FF:000005">
    <property type="entry name" value="Synaptotagmin 6"/>
    <property type="match status" value="1"/>
</dbReference>
<dbReference type="FunFam" id="2.60.40.150:FF:000011">
    <property type="entry name" value="Synaptotagmin 6"/>
    <property type="match status" value="1"/>
</dbReference>
<dbReference type="Gene3D" id="2.60.40.150">
    <property type="entry name" value="C2 domain"/>
    <property type="match status" value="2"/>
</dbReference>
<dbReference type="InterPro" id="IPR000008">
    <property type="entry name" value="C2_dom"/>
</dbReference>
<dbReference type="InterPro" id="IPR035892">
    <property type="entry name" value="C2_domain_sf"/>
</dbReference>
<dbReference type="InterPro" id="IPR001565">
    <property type="entry name" value="Synaptotagmin"/>
</dbReference>
<dbReference type="PANTHER" id="PTHR10024">
    <property type="entry name" value="SYNAPTOTAGMIN"/>
    <property type="match status" value="1"/>
</dbReference>
<dbReference type="PANTHER" id="PTHR10024:SF45">
    <property type="entry name" value="SYNAPTOTAGMIN-6"/>
    <property type="match status" value="1"/>
</dbReference>
<dbReference type="Pfam" id="PF00168">
    <property type="entry name" value="C2"/>
    <property type="match status" value="2"/>
</dbReference>
<dbReference type="PRINTS" id="PR00360">
    <property type="entry name" value="C2DOMAIN"/>
</dbReference>
<dbReference type="PRINTS" id="PR00399">
    <property type="entry name" value="SYNAPTOTAGMN"/>
</dbReference>
<dbReference type="SMART" id="SM00239">
    <property type="entry name" value="C2"/>
    <property type="match status" value="2"/>
</dbReference>
<dbReference type="SUPFAM" id="SSF49562">
    <property type="entry name" value="C2 domain (Calcium/lipid-binding domain, CaLB)"/>
    <property type="match status" value="2"/>
</dbReference>
<dbReference type="PROSITE" id="PS50004">
    <property type="entry name" value="C2"/>
    <property type="match status" value="2"/>
</dbReference>
<organism>
    <name type="scientific">Rattus norvegicus</name>
    <name type="common">Rat</name>
    <dbReference type="NCBI Taxonomy" id="10116"/>
    <lineage>
        <taxon>Eukaryota</taxon>
        <taxon>Metazoa</taxon>
        <taxon>Chordata</taxon>
        <taxon>Craniata</taxon>
        <taxon>Vertebrata</taxon>
        <taxon>Euteleostomi</taxon>
        <taxon>Mammalia</taxon>
        <taxon>Eutheria</taxon>
        <taxon>Euarchontoglires</taxon>
        <taxon>Glires</taxon>
        <taxon>Rodentia</taxon>
        <taxon>Myomorpha</taxon>
        <taxon>Muroidea</taxon>
        <taxon>Muridae</taxon>
        <taxon>Murinae</taxon>
        <taxon>Rattus</taxon>
    </lineage>
</organism>
<sequence>MSGVWGAGGPRCQAALAVLASLCRARPPPLGLDVETCQSFELQPPEQSPSAADSGTSVSLLAVVVIVCGVALVAVFFFLFWKLCWMPWRNKEASSPSSANPASEILQSPSSRGNMADKLKDPSALGFLEAAVKISHTSPDIPAEVQMSVKEHIMRHTKLQRQTTEPASSTRHTSFKRHLPRQMHVSSVDYGNELPPAAAEQPTSIGRIKPELYKQKSVDGDEAKSEAAKSCGKINFSLRYDYESETLIVRILKAFDLPAKDFCGSSDPYVKIYLLPDRKCKLQTRVHRKTLNPTFDENFHFPVPYEELADRKLHLSVFDFDRFSRHDMIGEVILDNLFEASDLSRETSIWKDIQYATSESVDLGEIMFSLCYLPTAGRLTLTVIKCRNLKAMDITGYSDPYVKVSLLCDGRRLKKKKTTIKKNTLNPVYNEAIIFDIPPENMDQVSLLISVMDYDRVGHNEIIGVCRVGISAEGLGRDHWNEMLAYPRKPIAHWHCLAEVKKSFKEGTPRL</sequence>
<accession>Q62746</accession>
<accession>Q4KLI6</accession>
<comment type="function">
    <text evidence="5">May be involved in Ca(2+)-dependent exocytosis of secretory vesicles through Ca(2+) and phospholipid binding to the C2 domain or may serve as Ca(2+) sensors in the process of vesicular trafficking and exocytosis. May mediate Ca(2+)-regulation of exocytosis in acrosomal reaction in sperm (By similarity).</text>
</comment>
<comment type="cofactor">
    <cofactor evidence="7">
        <name>Ca(2+)</name>
        <dbReference type="ChEBI" id="CHEBI:29108"/>
    </cofactor>
    <text evidence="3">Binds 3 Ca(2+) ions per subunit. The ions are bound to the C2 domains.</text>
</comment>
<comment type="subunit">
    <text evidence="5">Isoform 1: Homodimer; disulfide-linked via the cysteine motif. Isoform 1: Can also form heterodimers with SYT3, SYT7, SYT9 and SYT10. Isoform 1: Interacts with STX1A, STX1B and STX2; the interaction is Ca(2+)-dependent. Isoform 2: Is not able to form homodimer and heterodimers.</text>
</comment>
<comment type="subcellular location">
    <subcellularLocation>
        <location evidence="5">Cytoplasmic vesicle</location>
        <location evidence="5">Secretory vesicle</location>
        <location evidence="5">Synaptic vesicle membrane</location>
        <topology evidence="5">Single-pass membrane protein</topology>
    </subcellularLocation>
</comment>
<comment type="subcellular location">
    <molecule>Isoform 1</molecule>
    <subcellularLocation>
        <location evidence="5">Membrane</location>
        <topology evidence="1">Single-pass membrane protein</topology>
    </subcellularLocation>
    <text evidence="5">Localized predominantly to endoplasmic reticulum (ER) and/or Golgi-like perinuclear compartment (By similarity).</text>
</comment>
<comment type="subcellular location">
    <molecule>Isoform 2</molecule>
    <subcellularLocation>
        <location evidence="5">Cytoplasm</location>
        <location evidence="5">Cytosol</location>
    </subcellularLocation>
    <subcellularLocation>
        <location evidence="5">Cell membrane</location>
        <topology evidence="5">Peripheral membrane protein</topology>
    </subcellularLocation>
</comment>
<comment type="alternative products">
    <event type="alternative splicing"/>
    <isoform>
        <id>Q62746-1</id>
        <name>1</name>
        <sequence type="displayed"/>
    </isoform>
    <isoform>
        <id>Q62746-2</id>
        <name>2</name>
        <sequence type="described" ref="VSP_041730"/>
    </isoform>
</comment>
<comment type="domain">
    <text evidence="2">The cysteine motif mediates homo- or heterodimer formation via formation of disulfide bonds.</text>
</comment>
<comment type="similarity">
    <text evidence="10">Belongs to the synaptotagmin family.</text>
</comment>
<evidence type="ECO:0000250" key="1"/>
<evidence type="ECO:0000250" key="2">
    <source>
        <dbReference type="UniProtKB" id="O35681"/>
    </source>
</evidence>
<evidence type="ECO:0000250" key="3">
    <source>
        <dbReference type="UniProtKB" id="P40748"/>
    </source>
</evidence>
<evidence type="ECO:0000250" key="4">
    <source>
        <dbReference type="UniProtKB" id="Q5T7P8"/>
    </source>
</evidence>
<evidence type="ECO:0000250" key="5">
    <source>
        <dbReference type="UniProtKB" id="Q9R0N8"/>
    </source>
</evidence>
<evidence type="ECO:0000255" key="6"/>
<evidence type="ECO:0000255" key="7">
    <source>
        <dbReference type="PROSITE-ProRule" id="PRU00041"/>
    </source>
</evidence>
<evidence type="ECO:0000256" key="8">
    <source>
        <dbReference type="SAM" id="MobiDB-lite"/>
    </source>
</evidence>
<evidence type="ECO:0000303" key="9">
    <source>
    </source>
</evidence>
<evidence type="ECO:0000305" key="10"/>
<proteinExistence type="evidence at protein level"/>